<sequence>MVNEQIIDISGPLKGEIEVPGDKSMTHRAIMLASLAEGVSTIYKPLLGEDCRRTMDIFRLLGVEIKEDDEKLVVTSPGYQSFNTPHQVLYTGNSGTTTRLLAGLLSGLGIESVLSGDVSIGKRPMDRVLRPLKLMDANIEGIEDNYTPLIIKPSVIKGINYQMEVASAQVKSAILFASLFSKEPTIIKELDVSRNHTETMFKHFNIPIEAEGLSINTTPEAIRYIKPADFHVPGDISSAAFFIVAALITPGSDVTIHNVGINPTRSGIIDIVEKMGGNIQLFNQTTGAEPTASIRIQYTPMLQPITIEGELVPKAIDELPVIALLCTQAVGTSTIKDAEELKVKETNRIDTTADMLNLLGFELQPTNDGLIIHPSEFKTNATVDSLTDHRIGMMLAVASLLSSEPVKIKQFDAVNVSFPGFLPKLKLLENEG</sequence>
<comment type="function">
    <text evidence="1">Catalyzes the transfer of the enolpyruvyl moiety of phosphoenolpyruvate (PEP) to the 5-hydroxyl of shikimate-3-phosphate (S3P) to produce enolpyruvyl shikimate-3-phosphate and inorganic phosphate.</text>
</comment>
<comment type="catalytic activity">
    <reaction evidence="1">
        <text>3-phosphoshikimate + phosphoenolpyruvate = 5-O-(1-carboxyvinyl)-3-phosphoshikimate + phosphate</text>
        <dbReference type="Rhea" id="RHEA:21256"/>
        <dbReference type="ChEBI" id="CHEBI:43474"/>
        <dbReference type="ChEBI" id="CHEBI:57701"/>
        <dbReference type="ChEBI" id="CHEBI:58702"/>
        <dbReference type="ChEBI" id="CHEBI:145989"/>
        <dbReference type="EC" id="2.5.1.19"/>
    </reaction>
    <physiologicalReaction direction="left-to-right" evidence="1">
        <dbReference type="Rhea" id="RHEA:21257"/>
    </physiologicalReaction>
</comment>
<comment type="pathway">
    <text evidence="1">Metabolic intermediate biosynthesis; chorismate biosynthesis; chorismate from D-erythrose 4-phosphate and phosphoenolpyruvate: step 6/7.</text>
</comment>
<comment type="subunit">
    <text evidence="1">Monomer.</text>
</comment>
<comment type="subcellular location">
    <subcellularLocation>
        <location evidence="1">Cytoplasm</location>
    </subcellularLocation>
</comment>
<comment type="similarity">
    <text evidence="1">Belongs to the EPSP synthase family.</text>
</comment>
<proteinExistence type="inferred from homology"/>
<feature type="chain" id="PRO_0000088294" description="3-phosphoshikimate 1-carboxyvinyltransferase">
    <location>
        <begin position="1"/>
        <end position="432"/>
    </location>
</feature>
<feature type="active site" description="Proton acceptor" evidence="1">
    <location>
        <position position="317"/>
    </location>
</feature>
<feature type="binding site" evidence="1">
    <location>
        <position position="23"/>
    </location>
    <ligand>
        <name>3-phosphoshikimate</name>
        <dbReference type="ChEBI" id="CHEBI:145989"/>
    </ligand>
</feature>
<feature type="binding site" evidence="1">
    <location>
        <position position="23"/>
    </location>
    <ligand>
        <name>phosphoenolpyruvate</name>
        <dbReference type="ChEBI" id="CHEBI:58702"/>
    </ligand>
</feature>
<feature type="binding site" evidence="1">
    <location>
        <position position="24"/>
    </location>
    <ligand>
        <name>3-phosphoshikimate</name>
        <dbReference type="ChEBI" id="CHEBI:145989"/>
    </ligand>
</feature>
<feature type="binding site" evidence="1">
    <location>
        <position position="28"/>
    </location>
    <ligand>
        <name>3-phosphoshikimate</name>
        <dbReference type="ChEBI" id="CHEBI:145989"/>
    </ligand>
</feature>
<feature type="binding site" evidence="1">
    <location>
        <position position="95"/>
    </location>
    <ligand>
        <name>phosphoenolpyruvate</name>
        <dbReference type="ChEBI" id="CHEBI:58702"/>
    </ligand>
</feature>
<feature type="binding site" evidence="1">
    <location>
        <position position="123"/>
    </location>
    <ligand>
        <name>phosphoenolpyruvate</name>
        <dbReference type="ChEBI" id="CHEBI:58702"/>
    </ligand>
</feature>
<feature type="binding site" evidence="1">
    <location>
        <position position="167"/>
    </location>
    <ligand>
        <name>3-phosphoshikimate</name>
        <dbReference type="ChEBI" id="CHEBI:145989"/>
    </ligand>
</feature>
<feature type="binding site" evidence="1">
    <location>
        <position position="169"/>
    </location>
    <ligand>
        <name>3-phosphoshikimate</name>
        <dbReference type="ChEBI" id="CHEBI:145989"/>
    </ligand>
</feature>
<feature type="binding site" evidence="1">
    <location>
        <position position="169"/>
    </location>
    <ligand>
        <name>phosphoenolpyruvate</name>
        <dbReference type="ChEBI" id="CHEBI:58702"/>
    </ligand>
</feature>
<feature type="binding site" evidence="1">
    <location>
        <position position="317"/>
    </location>
    <ligand>
        <name>3-phosphoshikimate</name>
        <dbReference type="ChEBI" id="CHEBI:145989"/>
    </ligand>
</feature>
<feature type="binding site" evidence="1">
    <location>
        <position position="344"/>
    </location>
    <ligand>
        <name>3-phosphoshikimate</name>
        <dbReference type="ChEBI" id="CHEBI:145989"/>
    </ligand>
</feature>
<feature type="binding site" evidence="1">
    <location>
        <position position="348"/>
    </location>
    <ligand>
        <name>phosphoenolpyruvate</name>
        <dbReference type="ChEBI" id="CHEBI:58702"/>
    </ligand>
</feature>
<feature type="binding site" evidence="1">
    <location>
        <position position="390"/>
    </location>
    <ligand>
        <name>phosphoenolpyruvate</name>
        <dbReference type="ChEBI" id="CHEBI:58702"/>
    </ligand>
</feature>
<keyword id="KW-0028">Amino-acid biosynthesis</keyword>
<keyword id="KW-0057">Aromatic amino acid biosynthesis</keyword>
<keyword id="KW-0963">Cytoplasm</keyword>
<keyword id="KW-0808">Transferase</keyword>
<reference key="1">
    <citation type="journal article" date="2004" name="Proc. Natl. Acad. Sci. U.S.A.">
        <title>Complete genomes of two clinical Staphylococcus aureus strains: evidence for the rapid evolution of virulence and drug resistance.</title>
        <authorList>
            <person name="Holden M.T.G."/>
            <person name="Feil E.J."/>
            <person name="Lindsay J.A."/>
            <person name="Peacock S.J."/>
            <person name="Day N.P.J."/>
            <person name="Enright M.C."/>
            <person name="Foster T.J."/>
            <person name="Moore C.E."/>
            <person name="Hurst L."/>
            <person name="Atkin R."/>
            <person name="Barron A."/>
            <person name="Bason N."/>
            <person name="Bentley S.D."/>
            <person name="Chillingworth C."/>
            <person name="Chillingworth T."/>
            <person name="Churcher C."/>
            <person name="Clark L."/>
            <person name="Corton C."/>
            <person name="Cronin A."/>
            <person name="Doggett J."/>
            <person name="Dowd L."/>
            <person name="Feltwell T."/>
            <person name="Hance Z."/>
            <person name="Harris B."/>
            <person name="Hauser H."/>
            <person name="Holroyd S."/>
            <person name="Jagels K."/>
            <person name="James K.D."/>
            <person name="Lennard N."/>
            <person name="Line A."/>
            <person name="Mayes R."/>
            <person name="Moule S."/>
            <person name="Mungall K."/>
            <person name="Ormond D."/>
            <person name="Quail M.A."/>
            <person name="Rabbinowitsch E."/>
            <person name="Rutherford K.M."/>
            <person name="Sanders M."/>
            <person name="Sharp S."/>
            <person name="Simmonds M."/>
            <person name="Stevens K."/>
            <person name="Whitehead S."/>
            <person name="Barrell B.G."/>
            <person name="Spratt B.G."/>
            <person name="Parkhill J."/>
        </authorList>
    </citation>
    <scope>NUCLEOTIDE SEQUENCE [LARGE SCALE GENOMIC DNA]</scope>
    <source>
        <strain>MSSA476</strain>
    </source>
</reference>
<name>AROA_STAAS</name>
<dbReference type="EC" id="2.5.1.19" evidence="1"/>
<dbReference type="EMBL" id="BX571857">
    <property type="protein sequence ID" value="CAG43183.1"/>
    <property type="molecule type" value="Genomic_DNA"/>
</dbReference>
<dbReference type="RefSeq" id="WP_000245895.1">
    <property type="nucleotide sequence ID" value="NC_002953.3"/>
</dbReference>
<dbReference type="SMR" id="Q6G998"/>
<dbReference type="KEGG" id="sas:SAS1407"/>
<dbReference type="HOGENOM" id="CLU_024321_0_1_9"/>
<dbReference type="UniPathway" id="UPA00053">
    <property type="reaction ID" value="UER00089"/>
</dbReference>
<dbReference type="GO" id="GO:0005737">
    <property type="term" value="C:cytoplasm"/>
    <property type="evidence" value="ECO:0007669"/>
    <property type="project" value="UniProtKB-SubCell"/>
</dbReference>
<dbReference type="GO" id="GO:0003866">
    <property type="term" value="F:3-phosphoshikimate 1-carboxyvinyltransferase activity"/>
    <property type="evidence" value="ECO:0007669"/>
    <property type="project" value="UniProtKB-UniRule"/>
</dbReference>
<dbReference type="GO" id="GO:0008652">
    <property type="term" value="P:amino acid biosynthetic process"/>
    <property type="evidence" value="ECO:0007669"/>
    <property type="project" value="UniProtKB-KW"/>
</dbReference>
<dbReference type="GO" id="GO:0009073">
    <property type="term" value="P:aromatic amino acid family biosynthetic process"/>
    <property type="evidence" value="ECO:0007669"/>
    <property type="project" value="UniProtKB-KW"/>
</dbReference>
<dbReference type="GO" id="GO:0009423">
    <property type="term" value="P:chorismate biosynthetic process"/>
    <property type="evidence" value="ECO:0007669"/>
    <property type="project" value="UniProtKB-UniRule"/>
</dbReference>
<dbReference type="CDD" id="cd01556">
    <property type="entry name" value="EPSP_synthase"/>
    <property type="match status" value="1"/>
</dbReference>
<dbReference type="FunFam" id="3.65.10.10:FF:000005">
    <property type="entry name" value="3-phosphoshikimate 1-carboxyvinyltransferase"/>
    <property type="match status" value="1"/>
</dbReference>
<dbReference type="FunFam" id="3.65.10.10:FF:000006">
    <property type="entry name" value="3-phosphoshikimate 1-carboxyvinyltransferase"/>
    <property type="match status" value="1"/>
</dbReference>
<dbReference type="Gene3D" id="3.65.10.10">
    <property type="entry name" value="Enolpyruvate transferase domain"/>
    <property type="match status" value="2"/>
</dbReference>
<dbReference type="HAMAP" id="MF_00210">
    <property type="entry name" value="EPSP_synth"/>
    <property type="match status" value="1"/>
</dbReference>
<dbReference type="InterPro" id="IPR001986">
    <property type="entry name" value="Enolpyruvate_Tfrase_dom"/>
</dbReference>
<dbReference type="InterPro" id="IPR036968">
    <property type="entry name" value="Enolpyruvate_Tfrase_sf"/>
</dbReference>
<dbReference type="InterPro" id="IPR006264">
    <property type="entry name" value="EPSP_synthase"/>
</dbReference>
<dbReference type="InterPro" id="IPR023193">
    <property type="entry name" value="EPSP_synthase_CS"/>
</dbReference>
<dbReference type="InterPro" id="IPR013792">
    <property type="entry name" value="RNA3'P_cycl/enolpyr_Trfase_a/b"/>
</dbReference>
<dbReference type="NCBIfam" id="TIGR01356">
    <property type="entry name" value="aroA"/>
    <property type="match status" value="1"/>
</dbReference>
<dbReference type="PANTHER" id="PTHR21090">
    <property type="entry name" value="AROM/DEHYDROQUINATE SYNTHASE"/>
    <property type="match status" value="1"/>
</dbReference>
<dbReference type="PANTHER" id="PTHR21090:SF5">
    <property type="entry name" value="PENTAFUNCTIONAL AROM POLYPEPTIDE"/>
    <property type="match status" value="1"/>
</dbReference>
<dbReference type="Pfam" id="PF00275">
    <property type="entry name" value="EPSP_synthase"/>
    <property type="match status" value="1"/>
</dbReference>
<dbReference type="PIRSF" id="PIRSF000505">
    <property type="entry name" value="EPSPS"/>
    <property type="match status" value="1"/>
</dbReference>
<dbReference type="SUPFAM" id="SSF55205">
    <property type="entry name" value="EPT/RTPC-like"/>
    <property type="match status" value="1"/>
</dbReference>
<dbReference type="PROSITE" id="PS00104">
    <property type="entry name" value="EPSP_SYNTHASE_1"/>
    <property type="match status" value="1"/>
</dbReference>
<dbReference type="PROSITE" id="PS00885">
    <property type="entry name" value="EPSP_SYNTHASE_2"/>
    <property type="match status" value="1"/>
</dbReference>
<gene>
    <name evidence="1" type="primary">aroA</name>
    <name type="ordered locus">SAS1407</name>
</gene>
<evidence type="ECO:0000255" key="1">
    <source>
        <dbReference type="HAMAP-Rule" id="MF_00210"/>
    </source>
</evidence>
<accession>Q6G998</accession>
<organism>
    <name type="scientific">Staphylococcus aureus (strain MSSA476)</name>
    <dbReference type="NCBI Taxonomy" id="282459"/>
    <lineage>
        <taxon>Bacteria</taxon>
        <taxon>Bacillati</taxon>
        <taxon>Bacillota</taxon>
        <taxon>Bacilli</taxon>
        <taxon>Bacillales</taxon>
        <taxon>Staphylococcaceae</taxon>
        <taxon>Staphylococcus</taxon>
    </lineage>
</organism>
<protein>
    <recommendedName>
        <fullName evidence="1">3-phosphoshikimate 1-carboxyvinyltransferase</fullName>
        <ecNumber evidence="1">2.5.1.19</ecNumber>
    </recommendedName>
    <alternativeName>
        <fullName evidence="1">5-enolpyruvylshikimate-3-phosphate synthase</fullName>
        <shortName evidence="1">EPSP synthase</shortName>
        <shortName evidence="1">EPSPS</shortName>
    </alternativeName>
</protein>